<organism>
    <name type="scientific">Lemna minor</name>
    <name type="common">Common duckweed</name>
    <dbReference type="NCBI Taxonomy" id="4472"/>
    <lineage>
        <taxon>Eukaryota</taxon>
        <taxon>Viridiplantae</taxon>
        <taxon>Streptophyta</taxon>
        <taxon>Embryophyta</taxon>
        <taxon>Tracheophyta</taxon>
        <taxon>Spermatophyta</taxon>
        <taxon>Magnoliopsida</taxon>
        <taxon>Liliopsida</taxon>
        <taxon>Araceae</taxon>
        <taxon>Lemnoideae</taxon>
        <taxon>Lemna</taxon>
    </lineage>
</organism>
<evidence type="ECO:0000255" key="1">
    <source>
        <dbReference type="HAMAP-Rule" id="MF_00491"/>
    </source>
</evidence>
<evidence type="ECO:0000305" key="2">
    <source>
    </source>
</evidence>
<feature type="chain" id="PRO_0000343288" description="NAD(P)H-quinone oxidoreductase chain 4, chloroplastic">
    <location>
        <begin position="1"/>
        <end position="500"/>
    </location>
</feature>
<feature type="transmembrane region" description="Helical" evidence="1">
    <location>
        <begin position="4"/>
        <end position="24"/>
    </location>
</feature>
<feature type="transmembrane region" description="Helical" evidence="1">
    <location>
        <begin position="35"/>
        <end position="55"/>
    </location>
</feature>
<feature type="transmembrane region" description="Helical" evidence="1">
    <location>
        <begin position="87"/>
        <end position="107"/>
    </location>
</feature>
<feature type="transmembrane region" description="Helical" evidence="1">
    <location>
        <begin position="113"/>
        <end position="130"/>
    </location>
</feature>
<feature type="transmembrane region" description="Helical" evidence="1">
    <location>
        <begin position="134"/>
        <end position="154"/>
    </location>
</feature>
<feature type="transmembrane region" description="Helical" evidence="1">
    <location>
        <begin position="167"/>
        <end position="187"/>
    </location>
</feature>
<feature type="transmembrane region" description="Helical" evidence="1">
    <location>
        <begin position="208"/>
        <end position="228"/>
    </location>
</feature>
<feature type="transmembrane region" description="Helical" evidence="1">
    <location>
        <begin position="242"/>
        <end position="262"/>
    </location>
</feature>
<feature type="transmembrane region" description="Helical" evidence="1">
    <location>
        <begin position="274"/>
        <end position="294"/>
    </location>
</feature>
<feature type="transmembrane region" description="Helical" evidence="1">
    <location>
        <begin position="305"/>
        <end position="325"/>
    </location>
</feature>
<feature type="transmembrane region" description="Helical" evidence="1">
    <location>
        <begin position="330"/>
        <end position="350"/>
    </location>
</feature>
<feature type="transmembrane region" description="Helical" evidence="1">
    <location>
        <begin position="386"/>
        <end position="406"/>
    </location>
</feature>
<feature type="transmembrane region" description="Helical" evidence="1">
    <location>
        <begin position="416"/>
        <end position="436"/>
    </location>
</feature>
<feature type="transmembrane region" description="Helical" evidence="1">
    <location>
        <begin position="463"/>
        <end position="483"/>
    </location>
</feature>
<geneLocation type="chloroplast"/>
<comment type="catalytic activity">
    <reaction evidence="1">
        <text>a plastoquinone + NADH + (n+1) H(+)(in) = a plastoquinol + NAD(+) + n H(+)(out)</text>
        <dbReference type="Rhea" id="RHEA:42608"/>
        <dbReference type="Rhea" id="RHEA-COMP:9561"/>
        <dbReference type="Rhea" id="RHEA-COMP:9562"/>
        <dbReference type="ChEBI" id="CHEBI:15378"/>
        <dbReference type="ChEBI" id="CHEBI:17757"/>
        <dbReference type="ChEBI" id="CHEBI:57540"/>
        <dbReference type="ChEBI" id="CHEBI:57945"/>
        <dbReference type="ChEBI" id="CHEBI:62192"/>
    </reaction>
</comment>
<comment type="catalytic activity">
    <reaction evidence="1">
        <text>a plastoquinone + NADPH + (n+1) H(+)(in) = a plastoquinol + NADP(+) + n H(+)(out)</text>
        <dbReference type="Rhea" id="RHEA:42612"/>
        <dbReference type="Rhea" id="RHEA-COMP:9561"/>
        <dbReference type="Rhea" id="RHEA-COMP:9562"/>
        <dbReference type="ChEBI" id="CHEBI:15378"/>
        <dbReference type="ChEBI" id="CHEBI:17757"/>
        <dbReference type="ChEBI" id="CHEBI:57783"/>
        <dbReference type="ChEBI" id="CHEBI:58349"/>
        <dbReference type="ChEBI" id="CHEBI:62192"/>
    </reaction>
</comment>
<comment type="subcellular location">
    <subcellularLocation>
        <location evidence="1">Plastid</location>
        <location evidence="1">Chloroplast thylakoid membrane</location>
        <topology evidence="1">Multi-pass membrane protein</topology>
    </subcellularLocation>
</comment>
<comment type="RNA editing">
    <location>
        <position position="1" evidence="2"/>
    </location>
    <text evidence="2">The initiator methionine is created by RNA editing.</text>
</comment>
<comment type="similarity">
    <text evidence="1">Belongs to the complex I subunit 4 family.</text>
</comment>
<sequence length="500" mass="56214">MSYFPWLTLIVVFPIFAGCFIFFLPHKGNKVVRWYTMGICLLELLIMTYVFCYHFKLDDPLIQMEDDFQWINVFDFHWRLGIDGLSIGPILLTGFITTLATLAAWPVTRDSRLFHFLMLAMYSGQIGLFSSRDLLLFFMMWELELIPVYLLLSMWGGKKRLYSATKFILYTAGGSIFLLIGVLGMGLYGSNGPTLNFETVANQSYPLGLEILLYFGFLIAFAVKLPIIPLHTWLPDTHGEAHYSTCMLLAGILLKMGAYGLIRINMEFLSHAHSIFSPWLVIVGTIQIIYAALTSLGQRNLKKRIAYSSVSHMGFIIIGIGSLTNTGLNGAILQLLSHGFIGAALFFLGGTSCDRIRLVYLDEMGGISIPMPKIFTMFSSFSMASLALPGMSGFVAELMVFLGIITSQKYLLMTKIIITLVMAIGIILTPIYLLSMLRQMFYGYKLFNLSNSFFVDSGPRELFVSICIFLPVIAIGIYPDLVISLSVDKVQQILSNYYYR</sequence>
<gene>
    <name evidence="1" type="primary">ndhD</name>
</gene>
<reference key="1">
    <citation type="journal article" date="2008" name="J. Mol. Evol.">
        <title>Complete sequence of the Duckweed (Lemna minor) chloroplast genome: structural organization and phylogenetic relationships to other angiosperms.</title>
        <authorList>
            <person name="Mardanov A.V."/>
            <person name="Ravin N.V."/>
            <person name="Kuznetsov B.B."/>
            <person name="Samigullin T.H."/>
            <person name="Antonov A.S."/>
            <person name="Kolganova T.V."/>
            <person name="Skyabin K.G."/>
        </authorList>
    </citation>
    <scope>NUCLEOTIDE SEQUENCE [LARGE SCALE GENOMIC DNA]</scope>
    <scope>SUGGESTION OF RNA EDITING</scope>
</reference>
<accession>A9L9E7</accession>
<proteinExistence type="evidence at transcript level"/>
<protein>
    <recommendedName>
        <fullName evidence="1">NAD(P)H-quinone oxidoreductase chain 4, chloroplastic</fullName>
        <ecNumber evidence="1">7.1.1.-</ecNumber>
    </recommendedName>
    <alternativeName>
        <fullName evidence="1">NAD(P)H dehydrogenase, chain 4</fullName>
    </alternativeName>
    <alternativeName>
        <fullName evidence="1">NADH-plastoquinone oxidoreductase chain 4</fullName>
    </alternativeName>
</protein>
<keyword id="KW-0150">Chloroplast</keyword>
<keyword id="KW-0472">Membrane</keyword>
<keyword id="KW-0520">NAD</keyword>
<keyword id="KW-0521">NADP</keyword>
<keyword id="KW-0934">Plastid</keyword>
<keyword id="KW-0618">Plastoquinone</keyword>
<keyword id="KW-0874">Quinone</keyword>
<keyword id="KW-0691">RNA editing</keyword>
<keyword id="KW-0793">Thylakoid</keyword>
<keyword id="KW-1278">Translocase</keyword>
<keyword id="KW-0812">Transmembrane</keyword>
<keyword id="KW-1133">Transmembrane helix</keyword>
<dbReference type="EC" id="7.1.1.-" evidence="1"/>
<dbReference type="EMBL" id="DQ400350">
    <property type="protein sequence ID" value="ABD48546.1"/>
    <property type="molecule type" value="Genomic_DNA"/>
</dbReference>
<dbReference type="RefSeq" id="YP_001595559.1">
    <property type="nucleotide sequence ID" value="NC_010109.1"/>
</dbReference>
<dbReference type="SMR" id="A9L9E7"/>
<dbReference type="GeneID" id="5787518"/>
<dbReference type="GO" id="GO:0009535">
    <property type="term" value="C:chloroplast thylakoid membrane"/>
    <property type="evidence" value="ECO:0007669"/>
    <property type="project" value="UniProtKB-SubCell"/>
</dbReference>
<dbReference type="GO" id="GO:0008137">
    <property type="term" value="F:NADH dehydrogenase (ubiquinone) activity"/>
    <property type="evidence" value="ECO:0007669"/>
    <property type="project" value="InterPro"/>
</dbReference>
<dbReference type="GO" id="GO:0048039">
    <property type="term" value="F:ubiquinone binding"/>
    <property type="evidence" value="ECO:0007669"/>
    <property type="project" value="TreeGrafter"/>
</dbReference>
<dbReference type="GO" id="GO:0042773">
    <property type="term" value="P:ATP synthesis coupled electron transport"/>
    <property type="evidence" value="ECO:0007669"/>
    <property type="project" value="InterPro"/>
</dbReference>
<dbReference type="GO" id="GO:0015990">
    <property type="term" value="P:electron transport coupled proton transport"/>
    <property type="evidence" value="ECO:0007669"/>
    <property type="project" value="TreeGrafter"/>
</dbReference>
<dbReference type="HAMAP" id="MF_00491">
    <property type="entry name" value="NDH1_NuoM"/>
    <property type="match status" value="1"/>
</dbReference>
<dbReference type="InterPro" id="IPR022997">
    <property type="entry name" value="NADH_Q_OxRdtase_chain4"/>
</dbReference>
<dbReference type="InterPro" id="IPR010227">
    <property type="entry name" value="NADH_Q_OxRdtase_chainM/4"/>
</dbReference>
<dbReference type="InterPro" id="IPR003918">
    <property type="entry name" value="NADH_UbQ_OxRdtase"/>
</dbReference>
<dbReference type="InterPro" id="IPR001750">
    <property type="entry name" value="ND/Mrp_TM"/>
</dbReference>
<dbReference type="NCBIfam" id="TIGR01972">
    <property type="entry name" value="NDH_I_M"/>
    <property type="match status" value="1"/>
</dbReference>
<dbReference type="PANTHER" id="PTHR43507:SF21">
    <property type="entry name" value="NAD(P)H-QUINONE OXIDOREDUCTASE CHAIN 4, CHLOROPLASTIC"/>
    <property type="match status" value="1"/>
</dbReference>
<dbReference type="PANTHER" id="PTHR43507">
    <property type="entry name" value="NADH-UBIQUINONE OXIDOREDUCTASE CHAIN 4"/>
    <property type="match status" value="1"/>
</dbReference>
<dbReference type="Pfam" id="PF00361">
    <property type="entry name" value="Proton_antipo_M"/>
    <property type="match status" value="1"/>
</dbReference>
<dbReference type="PRINTS" id="PR01437">
    <property type="entry name" value="NUOXDRDTASE4"/>
</dbReference>
<name>NU4C_LEMMI</name>